<protein>
    <recommendedName>
        <fullName evidence="1">Integration host factor subunit alpha</fullName>
        <shortName evidence="1">IHF-alpha</shortName>
    </recommendedName>
</protein>
<accession>Q6MMJ0</accession>
<evidence type="ECO:0000255" key="1">
    <source>
        <dbReference type="HAMAP-Rule" id="MF_00380"/>
    </source>
</evidence>
<evidence type="ECO:0000305" key="2"/>
<keyword id="KW-0233">DNA recombination</keyword>
<keyword id="KW-0238">DNA-binding</keyword>
<keyword id="KW-1185">Reference proteome</keyword>
<keyword id="KW-0804">Transcription</keyword>
<keyword id="KW-0805">Transcription regulation</keyword>
<keyword id="KW-0810">Translation regulation</keyword>
<name>IHFA_BDEBA</name>
<organism>
    <name type="scientific">Bdellovibrio bacteriovorus (strain ATCC 15356 / DSM 50701 / NCIMB 9529 / HD100)</name>
    <dbReference type="NCBI Taxonomy" id="264462"/>
    <lineage>
        <taxon>Bacteria</taxon>
        <taxon>Pseudomonadati</taxon>
        <taxon>Bdellovibrionota</taxon>
        <taxon>Bdellovibrionia</taxon>
        <taxon>Bdellovibrionales</taxon>
        <taxon>Pseudobdellovibrionaceae</taxon>
        <taxon>Bdellovibrio</taxon>
    </lineage>
</organism>
<proteinExistence type="inferred from homology"/>
<reference key="1">
    <citation type="journal article" date="2004" name="Science">
        <title>A predator unmasked: life cycle of Bdellovibrio bacteriovorus from a genomic perspective.</title>
        <authorList>
            <person name="Rendulic S."/>
            <person name="Jagtap P."/>
            <person name="Rosinus A."/>
            <person name="Eppinger M."/>
            <person name="Baar C."/>
            <person name="Lanz C."/>
            <person name="Keller H."/>
            <person name="Lambert C."/>
            <person name="Evans K.J."/>
            <person name="Goesmann A."/>
            <person name="Meyer F."/>
            <person name="Sockett R.E."/>
            <person name="Schuster S.C."/>
        </authorList>
    </citation>
    <scope>NUCLEOTIDE SEQUENCE [LARGE SCALE GENOMIC DNA]</scope>
    <source>
        <strain>ATCC 15356 / DSM 50701 / NCIMB 9529 / HD100</strain>
    </source>
</reference>
<feature type="chain" id="PRO_0000277713" description="Integration host factor subunit alpha">
    <location>
        <begin position="1"/>
        <end position="110"/>
    </location>
</feature>
<comment type="function">
    <text evidence="1">This protein is one of the two subunits of integration host factor, a specific DNA-binding protein that functions in genetic recombination as well as in transcriptional and translational control.</text>
</comment>
<comment type="subunit">
    <text evidence="1">Heterodimer of an alpha and a beta chain.</text>
</comment>
<comment type="similarity">
    <text evidence="1">Belongs to the bacterial histone-like protein family.</text>
</comment>
<comment type="sequence caution" evidence="2">
    <conflict type="erroneous initiation">
        <sequence resource="EMBL-CDS" id="CAE79514"/>
    </conflict>
</comment>
<sequence>MTKADIVENVYQKIGFSKKEASELVELVFDTLKTVLQDGEKVKISGFGNFVVRGKNERIGRNPQTGEQIKISARRVLTFRPSQVLKAMLNGEEYAHLKDEDDDDDYDDNE</sequence>
<dbReference type="EMBL" id="BX842650">
    <property type="protein sequence ID" value="CAE79514.1"/>
    <property type="status" value="ALT_INIT"/>
    <property type="molecule type" value="Genomic_DNA"/>
</dbReference>
<dbReference type="RefSeq" id="WP_038451770.1">
    <property type="nucleotide sequence ID" value="NC_005363.1"/>
</dbReference>
<dbReference type="SMR" id="Q6MMJ0"/>
<dbReference type="STRING" id="264462.Bd1639"/>
<dbReference type="GeneID" id="93012628"/>
<dbReference type="KEGG" id="bba:Bd1639"/>
<dbReference type="eggNOG" id="COG0776">
    <property type="taxonomic scope" value="Bacteria"/>
</dbReference>
<dbReference type="HOGENOM" id="CLU_105066_1_1_7"/>
<dbReference type="Proteomes" id="UP000008080">
    <property type="component" value="Chromosome"/>
</dbReference>
<dbReference type="GO" id="GO:0005829">
    <property type="term" value="C:cytosol"/>
    <property type="evidence" value="ECO:0007669"/>
    <property type="project" value="TreeGrafter"/>
</dbReference>
<dbReference type="GO" id="GO:0003677">
    <property type="term" value="F:DNA binding"/>
    <property type="evidence" value="ECO:0007669"/>
    <property type="project" value="UniProtKB-UniRule"/>
</dbReference>
<dbReference type="GO" id="GO:0030527">
    <property type="term" value="F:structural constituent of chromatin"/>
    <property type="evidence" value="ECO:0007669"/>
    <property type="project" value="InterPro"/>
</dbReference>
<dbReference type="GO" id="GO:0006310">
    <property type="term" value="P:DNA recombination"/>
    <property type="evidence" value="ECO:0007669"/>
    <property type="project" value="UniProtKB-UniRule"/>
</dbReference>
<dbReference type="GO" id="GO:0009893">
    <property type="term" value="P:positive regulation of metabolic process"/>
    <property type="evidence" value="ECO:0007669"/>
    <property type="project" value="UniProtKB-ARBA"/>
</dbReference>
<dbReference type="GO" id="GO:0006355">
    <property type="term" value="P:regulation of DNA-templated transcription"/>
    <property type="evidence" value="ECO:0007669"/>
    <property type="project" value="UniProtKB-UniRule"/>
</dbReference>
<dbReference type="GO" id="GO:0006417">
    <property type="term" value="P:regulation of translation"/>
    <property type="evidence" value="ECO:0007669"/>
    <property type="project" value="UniProtKB-UniRule"/>
</dbReference>
<dbReference type="CDD" id="cd13835">
    <property type="entry name" value="IHF_A"/>
    <property type="match status" value="1"/>
</dbReference>
<dbReference type="FunFam" id="4.10.520.10:FF:000010">
    <property type="entry name" value="Integration host factor subunit alpha"/>
    <property type="match status" value="1"/>
</dbReference>
<dbReference type="Gene3D" id="4.10.520.10">
    <property type="entry name" value="IHF-like DNA-binding proteins"/>
    <property type="match status" value="1"/>
</dbReference>
<dbReference type="HAMAP" id="MF_00380">
    <property type="entry name" value="IHF_alpha"/>
    <property type="match status" value="1"/>
</dbReference>
<dbReference type="InterPro" id="IPR000119">
    <property type="entry name" value="Hist_DNA-bd"/>
</dbReference>
<dbReference type="InterPro" id="IPR020816">
    <property type="entry name" value="Histone-like_DNA-bd_CS"/>
</dbReference>
<dbReference type="InterPro" id="IPR010992">
    <property type="entry name" value="IHF-like_DNA-bd_dom_sf"/>
</dbReference>
<dbReference type="InterPro" id="IPR005684">
    <property type="entry name" value="IHF_alpha"/>
</dbReference>
<dbReference type="NCBIfam" id="TIGR00987">
    <property type="entry name" value="himA"/>
    <property type="match status" value="1"/>
</dbReference>
<dbReference type="NCBIfam" id="NF001401">
    <property type="entry name" value="PRK00285.1"/>
    <property type="match status" value="1"/>
</dbReference>
<dbReference type="PANTHER" id="PTHR33175">
    <property type="entry name" value="DNA-BINDING PROTEIN HU"/>
    <property type="match status" value="1"/>
</dbReference>
<dbReference type="PANTHER" id="PTHR33175:SF2">
    <property type="entry name" value="INTEGRATION HOST FACTOR SUBUNIT ALPHA"/>
    <property type="match status" value="1"/>
</dbReference>
<dbReference type="Pfam" id="PF00216">
    <property type="entry name" value="Bac_DNA_binding"/>
    <property type="match status" value="1"/>
</dbReference>
<dbReference type="PRINTS" id="PR01727">
    <property type="entry name" value="DNABINDINGHU"/>
</dbReference>
<dbReference type="SMART" id="SM00411">
    <property type="entry name" value="BHL"/>
    <property type="match status" value="1"/>
</dbReference>
<dbReference type="SUPFAM" id="SSF47729">
    <property type="entry name" value="IHF-like DNA-binding proteins"/>
    <property type="match status" value="1"/>
</dbReference>
<dbReference type="PROSITE" id="PS00045">
    <property type="entry name" value="HISTONE_LIKE"/>
    <property type="match status" value="1"/>
</dbReference>
<gene>
    <name evidence="1" type="primary">ihfA</name>
    <name evidence="1" type="synonym">himA</name>
    <name type="ordered locus">Bd1639</name>
</gene>